<organism>
    <name type="scientific">Limosilactobacillus fermentum (strain NBRC 3956 / LMG 18251)</name>
    <name type="common">Lactobacillus fermentum</name>
    <dbReference type="NCBI Taxonomy" id="334390"/>
    <lineage>
        <taxon>Bacteria</taxon>
        <taxon>Bacillati</taxon>
        <taxon>Bacillota</taxon>
        <taxon>Bacilli</taxon>
        <taxon>Lactobacillales</taxon>
        <taxon>Lactobacillaceae</taxon>
        <taxon>Limosilactobacillus</taxon>
    </lineage>
</organism>
<accession>B2GCN4</accession>
<reference key="1">
    <citation type="journal article" date="2008" name="DNA Res.">
        <title>Comparative genome analysis of Lactobacillus reuteri and Lactobacillus fermentum reveal a genomic island for reuterin and cobalamin production.</title>
        <authorList>
            <person name="Morita H."/>
            <person name="Toh H."/>
            <person name="Fukuda S."/>
            <person name="Horikawa H."/>
            <person name="Oshima K."/>
            <person name="Suzuki T."/>
            <person name="Murakami M."/>
            <person name="Hisamatsu S."/>
            <person name="Kato Y."/>
            <person name="Takizawa T."/>
            <person name="Fukuoka H."/>
            <person name="Yoshimura T."/>
            <person name="Itoh K."/>
            <person name="O'Sullivan D.J."/>
            <person name="McKay L.L."/>
            <person name="Ohno H."/>
            <person name="Kikuchi J."/>
            <person name="Masaoka T."/>
            <person name="Hattori M."/>
        </authorList>
    </citation>
    <scope>NUCLEOTIDE SEQUENCE [LARGE SCALE GENOMIC DNA]</scope>
    <source>
        <strain>NBRC 3956 / LMG 18251</strain>
    </source>
</reference>
<proteinExistence type="inferred from homology"/>
<gene>
    <name evidence="1" type="primary">moaA</name>
    <name type="ordered locus">LAF_1080</name>
</gene>
<dbReference type="EC" id="4.1.99.22" evidence="1"/>
<dbReference type="EMBL" id="AP008937">
    <property type="protein sequence ID" value="BAG27416.1"/>
    <property type="molecule type" value="Genomic_DNA"/>
</dbReference>
<dbReference type="RefSeq" id="WP_004563147.1">
    <property type="nucleotide sequence ID" value="NC_010610.1"/>
</dbReference>
<dbReference type="SMR" id="B2GCN4"/>
<dbReference type="GeneID" id="83714467"/>
<dbReference type="KEGG" id="lfe:LAF_1080"/>
<dbReference type="eggNOG" id="COG2896">
    <property type="taxonomic scope" value="Bacteria"/>
</dbReference>
<dbReference type="HOGENOM" id="CLU_009273_0_1_9"/>
<dbReference type="UniPathway" id="UPA00344"/>
<dbReference type="Proteomes" id="UP000001697">
    <property type="component" value="Chromosome"/>
</dbReference>
<dbReference type="GO" id="GO:0051539">
    <property type="term" value="F:4 iron, 4 sulfur cluster binding"/>
    <property type="evidence" value="ECO:0007669"/>
    <property type="project" value="UniProtKB-UniRule"/>
</dbReference>
<dbReference type="GO" id="GO:0061799">
    <property type="term" value="F:cyclic pyranopterin monophosphate synthase activity"/>
    <property type="evidence" value="ECO:0007669"/>
    <property type="project" value="TreeGrafter"/>
</dbReference>
<dbReference type="GO" id="GO:0061798">
    <property type="term" value="F:GTP 3',8'-cyclase activity"/>
    <property type="evidence" value="ECO:0007669"/>
    <property type="project" value="UniProtKB-UniRule"/>
</dbReference>
<dbReference type="GO" id="GO:0005525">
    <property type="term" value="F:GTP binding"/>
    <property type="evidence" value="ECO:0007669"/>
    <property type="project" value="UniProtKB-UniRule"/>
</dbReference>
<dbReference type="GO" id="GO:0046872">
    <property type="term" value="F:metal ion binding"/>
    <property type="evidence" value="ECO:0007669"/>
    <property type="project" value="UniProtKB-KW"/>
</dbReference>
<dbReference type="GO" id="GO:1904047">
    <property type="term" value="F:S-adenosyl-L-methionine binding"/>
    <property type="evidence" value="ECO:0007669"/>
    <property type="project" value="UniProtKB-UniRule"/>
</dbReference>
<dbReference type="GO" id="GO:0006777">
    <property type="term" value="P:Mo-molybdopterin cofactor biosynthetic process"/>
    <property type="evidence" value="ECO:0007669"/>
    <property type="project" value="UniProtKB-UniRule"/>
</dbReference>
<dbReference type="CDD" id="cd01335">
    <property type="entry name" value="Radical_SAM"/>
    <property type="match status" value="1"/>
</dbReference>
<dbReference type="CDD" id="cd21117">
    <property type="entry name" value="Twitch_MoaA"/>
    <property type="match status" value="1"/>
</dbReference>
<dbReference type="Gene3D" id="3.20.20.70">
    <property type="entry name" value="Aldolase class I"/>
    <property type="match status" value="1"/>
</dbReference>
<dbReference type="HAMAP" id="MF_01225_B">
    <property type="entry name" value="MoaA_B"/>
    <property type="match status" value="1"/>
</dbReference>
<dbReference type="InterPro" id="IPR013785">
    <property type="entry name" value="Aldolase_TIM"/>
</dbReference>
<dbReference type="InterPro" id="IPR006638">
    <property type="entry name" value="Elp3/MiaA/NifB-like_rSAM"/>
</dbReference>
<dbReference type="InterPro" id="IPR013483">
    <property type="entry name" value="MoaA"/>
</dbReference>
<dbReference type="InterPro" id="IPR000385">
    <property type="entry name" value="MoaA_NifB_PqqE_Fe-S-bd_CS"/>
</dbReference>
<dbReference type="InterPro" id="IPR010505">
    <property type="entry name" value="MoaA_twitch"/>
</dbReference>
<dbReference type="InterPro" id="IPR050105">
    <property type="entry name" value="MoCo_biosynth_MoaA/MoaC"/>
</dbReference>
<dbReference type="InterPro" id="IPR007197">
    <property type="entry name" value="rSAM"/>
</dbReference>
<dbReference type="NCBIfam" id="TIGR02666">
    <property type="entry name" value="moaA"/>
    <property type="match status" value="1"/>
</dbReference>
<dbReference type="NCBIfam" id="NF001199">
    <property type="entry name" value="PRK00164.2-1"/>
    <property type="match status" value="1"/>
</dbReference>
<dbReference type="PANTHER" id="PTHR22960:SF0">
    <property type="entry name" value="MOLYBDENUM COFACTOR BIOSYNTHESIS PROTEIN 1"/>
    <property type="match status" value="1"/>
</dbReference>
<dbReference type="PANTHER" id="PTHR22960">
    <property type="entry name" value="MOLYBDOPTERIN COFACTOR SYNTHESIS PROTEIN A"/>
    <property type="match status" value="1"/>
</dbReference>
<dbReference type="Pfam" id="PF13353">
    <property type="entry name" value="Fer4_12"/>
    <property type="match status" value="1"/>
</dbReference>
<dbReference type="Pfam" id="PF06463">
    <property type="entry name" value="Mob_synth_C"/>
    <property type="match status" value="1"/>
</dbReference>
<dbReference type="Pfam" id="PF04055">
    <property type="entry name" value="Radical_SAM"/>
    <property type="match status" value="1"/>
</dbReference>
<dbReference type="SFLD" id="SFLDG01383">
    <property type="entry name" value="cyclic_pyranopterin_phosphate"/>
    <property type="match status" value="1"/>
</dbReference>
<dbReference type="SFLD" id="SFLDG01067">
    <property type="entry name" value="SPASM/twitch_domain_containing"/>
    <property type="match status" value="1"/>
</dbReference>
<dbReference type="SMART" id="SM00729">
    <property type="entry name" value="Elp3"/>
    <property type="match status" value="1"/>
</dbReference>
<dbReference type="SUPFAM" id="SSF102114">
    <property type="entry name" value="Radical SAM enzymes"/>
    <property type="match status" value="1"/>
</dbReference>
<dbReference type="PROSITE" id="PS01305">
    <property type="entry name" value="MOAA_NIFB_PQQE"/>
    <property type="match status" value="1"/>
</dbReference>
<dbReference type="PROSITE" id="PS51918">
    <property type="entry name" value="RADICAL_SAM"/>
    <property type="match status" value="1"/>
</dbReference>
<name>MOAA_LIMF3</name>
<feature type="chain" id="PRO_1000139331" description="GTP 3',8-cyclase">
    <location>
        <begin position="1"/>
        <end position="332"/>
    </location>
</feature>
<feature type="domain" description="Radical SAM core" evidence="2">
    <location>
        <begin position="7"/>
        <end position="221"/>
    </location>
</feature>
<feature type="binding site" evidence="1">
    <location>
        <position position="16"/>
    </location>
    <ligand>
        <name>GTP</name>
        <dbReference type="ChEBI" id="CHEBI:37565"/>
    </ligand>
</feature>
<feature type="binding site" evidence="1">
    <location>
        <position position="23"/>
    </location>
    <ligand>
        <name>[4Fe-4S] cluster</name>
        <dbReference type="ChEBI" id="CHEBI:49883"/>
        <label>1</label>
        <note>4Fe-4S-S-AdoMet</note>
    </ligand>
</feature>
<feature type="binding site" evidence="1">
    <location>
        <position position="27"/>
    </location>
    <ligand>
        <name>[4Fe-4S] cluster</name>
        <dbReference type="ChEBI" id="CHEBI:49883"/>
        <label>1</label>
        <note>4Fe-4S-S-AdoMet</note>
    </ligand>
</feature>
<feature type="binding site" evidence="1">
    <location>
        <position position="29"/>
    </location>
    <ligand>
        <name>S-adenosyl-L-methionine</name>
        <dbReference type="ChEBI" id="CHEBI:59789"/>
    </ligand>
</feature>
<feature type="binding site" evidence="1">
    <location>
        <position position="30"/>
    </location>
    <ligand>
        <name>[4Fe-4S] cluster</name>
        <dbReference type="ChEBI" id="CHEBI:49883"/>
        <label>1</label>
        <note>4Fe-4S-S-AdoMet</note>
    </ligand>
</feature>
<feature type="binding site" evidence="1">
    <location>
        <position position="66"/>
    </location>
    <ligand>
        <name>GTP</name>
        <dbReference type="ChEBI" id="CHEBI:37565"/>
    </ligand>
</feature>
<feature type="binding site" evidence="1">
    <location>
        <position position="70"/>
    </location>
    <ligand>
        <name>S-adenosyl-L-methionine</name>
        <dbReference type="ChEBI" id="CHEBI:59789"/>
    </ligand>
</feature>
<feature type="binding site" evidence="1">
    <location>
        <position position="97"/>
    </location>
    <ligand>
        <name>GTP</name>
        <dbReference type="ChEBI" id="CHEBI:37565"/>
    </ligand>
</feature>
<feature type="binding site" evidence="1">
    <location>
        <position position="121"/>
    </location>
    <ligand>
        <name>S-adenosyl-L-methionine</name>
        <dbReference type="ChEBI" id="CHEBI:59789"/>
    </ligand>
</feature>
<feature type="binding site" evidence="1">
    <location>
        <position position="158"/>
    </location>
    <ligand>
        <name>GTP</name>
        <dbReference type="ChEBI" id="CHEBI:37565"/>
    </ligand>
</feature>
<feature type="binding site" evidence="1">
    <location>
        <position position="192"/>
    </location>
    <ligand>
        <name>S-adenosyl-L-methionine</name>
        <dbReference type="ChEBI" id="CHEBI:59789"/>
    </ligand>
</feature>
<feature type="binding site" evidence="1">
    <location>
        <position position="256"/>
    </location>
    <ligand>
        <name>[4Fe-4S] cluster</name>
        <dbReference type="ChEBI" id="CHEBI:49883"/>
        <label>2</label>
        <note>4Fe-4S-substrate</note>
    </ligand>
</feature>
<feature type="binding site" evidence="1">
    <location>
        <position position="259"/>
    </location>
    <ligand>
        <name>[4Fe-4S] cluster</name>
        <dbReference type="ChEBI" id="CHEBI:49883"/>
        <label>2</label>
        <note>4Fe-4S-substrate</note>
    </ligand>
</feature>
<feature type="binding site" evidence="1">
    <location>
        <begin position="261"/>
        <end position="263"/>
    </location>
    <ligand>
        <name>GTP</name>
        <dbReference type="ChEBI" id="CHEBI:37565"/>
    </ligand>
</feature>
<feature type="binding site" evidence="1">
    <location>
        <position position="273"/>
    </location>
    <ligand>
        <name>[4Fe-4S] cluster</name>
        <dbReference type="ChEBI" id="CHEBI:49883"/>
        <label>2</label>
        <note>4Fe-4S-substrate</note>
    </ligand>
</feature>
<sequence length="332" mass="37925">MKKLYDQYERLHDYVRISITDRCNLRCVYCMPKEGLPFFPTDRVLSQDEIVQLITNFAQLGVHKVRITGGEPLLRTDVVDIVRRIKEIDGIEDVSITTNGLFLAKKAKALKEAGLDRLNISLDTFKPEVYKEITRGGNINQVLDGIATASALHFKKIKLNIVLIRGQNDDELLDFINYTKDHDVNVRFIEFMPIGNSLEEWKQEYVALDSVFDLCKQAGLDYHPIDLAGNGPSDNYQVEGYTGSFGLIHPISSKFCENCNRLRITADGYIKACLYWNEEINVRKLIYDFDAFKAGVQRALDNKPLNHEMAMKTTDRIIDKAPTWRHMSQIGG</sequence>
<evidence type="ECO:0000255" key="1">
    <source>
        <dbReference type="HAMAP-Rule" id="MF_01225"/>
    </source>
</evidence>
<evidence type="ECO:0000255" key="2">
    <source>
        <dbReference type="PROSITE-ProRule" id="PRU01266"/>
    </source>
</evidence>
<comment type="function">
    <text evidence="1">Catalyzes the cyclization of GTP to (8S)-3',8-cyclo-7,8-dihydroguanosine 5'-triphosphate.</text>
</comment>
<comment type="catalytic activity">
    <reaction evidence="1">
        <text>GTP + AH2 + S-adenosyl-L-methionine = (8S)-3',8-cyclo-7,8-dihydroguanosine 5'-triphosphate + 5'-deoxyadenosine + L-methionine + A + H(+)</text>
        <dbReference type="Rhea" id="RHEA:49576"/>
        <dbReference type="ChEBI" id="CHEBI:13193"/>
        <dbReference type="ChEBI" id="CHEBI:15378"/>
        <dbReference type="ChEBI" id="CHEBI:17319"/>
        <dbReference type="ChEBI" id="CHEBI:17499"/>
        <dbReference type="ChEBI" id="CHEBI:37565"/>
        <dbReference type="ChEBI" id="CHEBI:57844"/>
        <dbReference type="ChEBI" id="CHEBI:59789"/>
        <dbReference type="ChEBI" id="CHEBI:131766"/>
        <dbReference type="EC" id="4.1.99.22"/>
    </reaction>
</comment>
<comment type="cofactor">
    <cofactor evidence="1">
        <name>[4Fe-4S] cluster</name>
        <dbReference type="ChEBI" id="CHEBI:49883"/>
    </cofactor>
    <text evidence="1">Binds 2 [4Fe-4S] clusters. Binds 1 [4Fe-4S] cluster coordinated with 3 cysteines and an exchangeable S-adenosyl-L-methionine and 1 [4Fe-4S] cluster coordinated with 3 cysteines and the GTP-derived substrate.</text>
</comment>
<comment type="pathway">
    <text evidence="1">Cofactor biosynthesis; molybdopterin biosynthesis.</text>
</comment>
<comment type="subunit">
    <text evidence="1">Monomer and homodimer.</text>
</comment>
<comment type="similarity">
    <text evidence="1">Belongs to the radical SAM superfamily. MoaA family.</text>
</comment>
<protein>
    <recommendedName>
        <fullName evidence="1">GTP 3',8-cyclase</fullName>
        <ecNumber evidence="1">4.1.99.22</ecNumber>
    </recommendedName>
    <alternativeName>
        <fullName evidence="1">Molybdenum cofactor biosynthesis protein A</fullName>
    </alternativeName>
</protein>
<keyword id="KW-0004">4Fe-4S</keyword>
<keyword id="KW-0342">GTP-binding</keyword>
<keyword id="KW-0408">Iron</keyword>
<keyword id="KW-0411">Iron-sulfur</keyword>
<keyword id="KW-0456">Lyase</keyword>
<keyword id="KW-0479">Metal-binding</keyword>
<keyword id="KW-0501">Molybdenum cofactor biosynthesis</keyword>
<keyword id="KW-0547">Nucleotide-binding</keyword>
<keyword id="KW-1185">Reference proteome</keyword>
<keyword id="KW-0949">S-adenosyl-L-methionine</keyword>